<keyword id="KW-0068">Autocatalytic cleavage</keyword>
<keyword id="KW-1015">Disulfide bond</keyword>
<keyword id="KW-0238">DNA-binding</keyword>
<keyword id="KW-1048">Host nucleus</keyword>
<keyword id="KW-0378">Hydrolase</keyword>
<keyword id="KW-0426">Late protein</keyword>
<keyword id="KW-0645">Protease</keyword>
<keyword id="KW-1185">Reference proteome</keyword>
<keyword id="KW-0788">Thiol protease</keyword>
<keyword id="KW-0946">Virion</keyword>
<dbReference type="EC" id="3.4.22.39" evidence="1"/>
<dbReference type="EMBL" id="AF224336">
    <property type="protein sequence ID" value="AAF86933.1"/>
    <property type="molecule type" value="Genomic_DNA"/>
</dbReference>
<dbReference type="RefSeq" id="NP_062444.1">
    <property type="nucleotide sequence ID" value="NC_002501.1"/>
</dbReference>
<dbReference type="SMR" id="Q9IIH4"/>
<dbReference type="MEROPS" id="C05.001"/>
<dbReference type="KEGG" id="vg:1732705"/>
<dbReference type="OrthoDB" id="9248at10239"/>
<dbReference type="Proteomes" id="UP000009247">
    <property type="component" value="Genome"/>
</dbReference>
<dbReference type="GO" id="GO:0042025">
    <property type="term" value="C:host cell nucleus"/>
    <property type="evidence" value="ECO:0007669"/>
    <property type="project" value="UniProtKB-SubCell"/>
</dbReference>
<dbReference type="GO" id="GO:0044423">
    <property type="term" value="C:virion component"/>
    <property type="evidence" value="ECO:0007669"/>
    <property type="project" value="UniProtKB-UniRule"/>
</dbReference>
<dbReference type="GO" id="GO:0004197">
    <property type="term" value="F:cysteine-type endopeptidase activity"/>
    <property type="evidence" value="ECO:0007669"/>
    <property type="project" value="UniProtKB-UniRule"/>
</dbReference>
<dbReference type="GO" id="GO:0003677">
    <property type="term" value="F:DNA binding"/>
    <property type="evidence" value="ECO:0007669"/>
    <property type="project" value="UniProtKB-UniRule"/>
</dbReference>
<dbReference type="GO" id="GO:0006508">
    <property type="term" value="P:proteolysis"/>
    <property type="evidence" value="ECO:0007669"/>
    <property type="project" value="UniProtKB-KW"/>
</dbReference>
<dbReference type="Gene3D" id="3.40.395.10">
    <property type="entry name" value="Adenoviral Proteinase, Chain A"/>
    <property type="match status" value="1"/>
</dbReference>
<dbReference type="HAMAP" id="MF_04059">
    <property type="entry name" value="ADV_PRO"/>
    <property type="match status" value="1"/>
</dbReference>
<dbReference type="InterPro" id="IPR038765">
    <property type="entry name" value="Papain-like_cys_pep_sf"/>
</dbReference>
<dbReference type="InterPro" id="IPR000855">
    <property type="entry name" value="Peptidase_C5"/>
</dbReference>
<dbReference type="Pfam" id="PF00770">
    <property type="entry name" value="Peptidase_C5"/>
    <property type="match status" value="1"/>
</dbReference>
<dbReference type="PIRSF" id="PIRSF001218">
    <property type="entry name" value="Protease_ADV"/>
    <property type="match status" value="1"/>
</dbReference>
<dbReference type="PRINTS" id="PR00703">
    <property type="entry name" value="ADVENDOPTASE"/>
</dbReference>
<dbReference type="SUPFAM" id="SSF54001">
    <property type="entry name" value="Cysteine proteinases"/>
    <property type="match status" value="1"/>
</dbReference>
<sequence>MGTSGADLENIVLSLGLHSGFLGIFDKHFPGFLNVNKPSFAIVNTGDIIQGGLHWIAFAFDNVTSTFFMFDPFGWSDMELYRKYEFQYHRILKSTALTKPSRCIKLVKSKEAVQCTCSAACGLFCCLFLASFYHYPTFPMRGNPIIDLVDGIPPTKLHSSYGIYLTHCNQKKLIAWLLSNSAYFRKNAMLMIHNTRLYYLYTHL</sequence>
<organism>
    <name type="scientific">Frog adenovirus 1 (strain ATCC VR-896)</name>
    <name type="common">FrAdV-1</name>
    <dbReference type="NCBI Taxonomy" id="114102"/>
    <lineage>
        <taxon>Viruses</taxon>
        <taxon>Varidnaviria</taxon>
        <taxon>Bamfordvirae</taxon>
        <taxon>Preplasmiviricota</taxon>
        <taxon>Tectiliviricetes</taxon>
        <taxon>Rowavirales</taxon>
        <taxon>Adenoviridae</taxon>
        <taxon>Siadenovirus</taxon>
        <taxon>Frog adenovirus</taxon>
    </lineage>
</organism>
<accession>Q9IIH4</accession>
<protein>
    <recommendedName>
        <fullName evidence="1">Protease</fullName>
        <ecNumber evidence="1">3.4.22.39</ecNumber>
    </recommendedName>
    <alternativeName>
        <fullName evidence="1">Adenain</fullName>
    </alternativeName>
    <alternativeName>
        <fullName evidence="1">Adenovirus protease</fullName>
        <shortName evidence="1">AVP</shortName>
    </alternativeName>
    <alternativeName>
        <fullName evidence="1">Adenovirus proteinase</fullName>
    </alternativeName>
    <alternativeName>
        <fullName evidence="1">Endoprotease</fullName>
    </alternativeName>
</protein>
<gene>
    <name evidence="1" type="primary">L3</name>
</gene>
<comment type="function">
    <text evidence="1">Cleaves viral precursor proteins (pTP, pIIIa, pVI, pVII, pVIII, and pX) inside newly assembled particles giving rise to mature virions. Protease complexed to its cofactor slides along the viral DNA to specifically locate and cleave the viral precursors. Mature virions have a weakened organization compared to the unmature virions, thereby facilitating subsequent uncoating. Without maturation, the particle lacks infectivity and is unable to uncoat. Late in adenovirus infection, in the cytoplasm, may participate in the cytoskeleton destruction. Cleaves host cell cytoskeletal keratins K7 and K18.</text>
</comment>
<comment type="catalytic activity">
    <reaction evidence="1">
        <text>Cleaves proteins of the adenovirus and its host cell at two consensus sites: -Yaa-Xaa-Gly-Gly-|-Xaa- and -Yaa-Xaa-Gly-Xaa-|-Gly- (in which Yaa is Met, Ile or Leu, and Xaa is any amino acid).</text>
        <dbReference type="EC" id="3.4.22.39"/>
    </reaction>
</comment>
<comment type="activity regulation">
    <text evidence="1">Requires DNA and protease cofactor for maximal activation. Inside nascent virions, becomes partially activated by binding to the viral DNA, allowing it to cleave the cofactor that binds to the protease and fully activates it. Actin, like the viral protease cofactor, seems to act as a cofactor in the cleavage of cytokeratin 18 and of actin itself.</text>
</comment>
<comment type="subunit">
    <text evidence="1">Interacts with protease cofactor pVI-C; this interaction is necessary for protease activation.</text>
</comment>
<comment type="subcellular location">
    <subcellularLocation>
        <location evidence="1">Virion</location>
    </subcellularLocation>
    <subcellularLocation>
        <location evidence="1">Host nucleus</location>
    </subcellularLocation>
    <text evidence="1">Present in about 10 copies per virion.</text>
</comment>
<comment type="induction">
    <text evidence="1">Expressed in the late phase of the viral replicative cycle.</text>
</comment>
<comment type="miscellaneous">
    <text evidence="1">All late proteins expressed from the major late promoter are produced by alternative splicing and alternative polyadenylation of the same gene giving rise to non-overlapping ORFs. A leader sequence is present in the N-terminus of all these mRNAs and is recognized by the viral shutoff protein to provide expression although conventional translation via ribosome scanning from the cap has been shut off in the host cell.</text>
</comment>
<comment type="similarity">
    <text evidence="1">Belongs to the peptidase C5 family.</text>
</comment>
<feature type="chain" id="PRO_0000218042" description="Protease">
    <location>
        <begin position="1"/>
        <end position="204"/>
    </location>
</feature>
<feature type="active site" evidence="1">
    <location>
        <position position="54"/>
    </location>
</feature>
<feature type="active site" evidence="1">
    <location>
        <position position="71"/>
    </location>
</feature>
<feature type="active site" evidence="1">
    <location>
        <position position="121"/>
    </location>
</feature>
<feature type="site" description="Cleavage; by autolysis" evidence="1">
    <location>
        <begin position="51"/>
        <end position="52"/>
    </location>
</feature>
<feature type="disulfide bond" description="Interchain (with C-10 in cleaved protease cofactor pVI-C)" evidence="1">
    <location>
        <position position="103"/>
    </location>
</feature>
<evidence type="ECO:0000255" key="1">
    <source>
        <dbReference type="HAMAP-Rule" id="MF_04059"/>
    </source>
</evidence>
<proteinExistence type="inferred from homology"/>
<organismHost>
    <name type="scientific">Lithobates pipiens</name>
    <name type="common">Northern leopard frog</name>
    <name type="synonym">Rana pipiens</name>
    <dbReference type="NCBI Taxonomy" id="8404"/>
</organismHost>
<reference key="1">
    <citation type="submission" date="2000-01" db="EMBL/GenBank/DDBJ databases">
        <title>Phylogenetic position of an amphibian adenovirus.</title>
        <authorList>
            <person name="Davison A.J."/>
            <person name="Wright K.M."/>
            <person name="Harrach B."/>
        </authorList>
    </citation>
    <scope>NUCLEOTIDE SEQUENCE [GENOMIC DNA]</scope>
    <source>
        <strain>Isolate ATCC VR-896</strain>
    </source>
</reference>
<name>PRO_ADEF1</name>